<feature type="chain" id="PRO_1000145495" description="dITP/XTP pyrophosphatase">
    <location>
        <begin position="1"/>
        <end position="206"/>
    </location>
</feature>
<feature type="active site" description="Proton acceptor" evidence="1">
    <location>
        <position position="72"/>
    </location>
</feature>
<feature type="binding site" evidence="1">
    <location>
        <begin position="7"/>
        <end position="12"/>
    </location>
    <ligand>
        <name>substrate</name>
    </ligand>
</feature>
<feature type="binding site" evidence="1">
    <location>
        <position position="72"/>
    </location>
    <ligand>
        <name>Mg(2+)</name>
        <dbReference type="ChEBI" id="CHEBI:18420"/>
    </ligand>
</feature>
<feature type="binding site" evidence="1">
    <location>
        <position position="73"/>
    </location>
    <ligand>
        <name>substrate</name>
    </ligand>
</feature>
<feature type="binding site" evidence="1">
    <location>
        <begin position="155"/>
        <end position="158"/>
    </location>
    <ligand>
        <name>substrate</name>
    </ligand>
</feature>
<feature type="binding site" evidence="1">
    <location>
        <position position="178"/>
    </location>
    <ligand>
        <name>substrate</name>
    </ligand>
</feature>
<feature type="binding site" evidence="1">
    <location>
        <begin position="183"/>
        <end position="184"/>
    </location>
    <ligand>
        <name>substrate</name>
    </ligand>
</feature>
<feature type="strand" evidence="2">
    <location>
        <begin position="2"/>
        <end position="6"/>
    </location>
</feature>
<feature type="helix" evidence="2">
    <location>
        <begin position="10"/>
        <end position="23"/>
    </location>
</feature>
<feature type="strand" evidence="2">
    <location>
        <begin position="29"/>
        <end position="32"/>
    </location>
</feature>
<feature type="helix" evidence="2">
    <location>
        <begin position="33"/>
        <end position="35"/>
    </location>
</feature>
<feature type="helix" evidence="2">
    <location>
        <begin position="49"/>
        <end position="64"/>
    </location>
</feature>
<feature type="strand" evidence="2">
    <location>
        <begin position="65"/>
        <end position="77"/>
    </location>
</feature>
<feature type="helix" evidence="2">
    <location>
        <begin position="78"/>
        <end position="80"/>
    </location>
</feature>
<feature type="helix" evidence="2">
    <location>
        <begin position="85"/>
        <end position="90"/>
    </location>
</feature>
<feature type="helix" evidence="2">
    <location>
        <begin position="98"/>
        <end position="108"/>
    </location>
</feature>
<feature type="turn" evidence="2">
    <location>
        <begin position="109"/>
        <end position="111"/>
    </location>
</feature>
<feature type="helix" evidence="2">
    <location>
        <begin position="114"/>
        <end position="116"/>
    </location>
</feature>
<feature type="strand" evidence="2">
    <location>
        <begin position="118"/>
        <end position="128"/>
    </location>
</feature>
<feature type="strand" evidence="2">
    <location>
        <begin position="134"/>
        <end position="145"/>
    </location>
</feature>
<feature type="helix" evidence="2">
    <location>
        <begin position="158"/>
        <end position="160"/>
    </location>
</feature>
<feature type="strand" evidence="2">
    <location>
        <begin position="161"/>
        <end position="163"/>
    </location>
</feature>
<feature type="strand" evidence="2">
    <location>
        <begin position="166"/>
        <end position="168"/>
    </location>
</feature>
<feature type="helix" evidence="2">
    <location>
        <begin position="170"/>
        <end position="172"/>
    </location>
</feature>
<feature type="helix" evidence="2">
    <location>
        <begin position="175"/>
        <end position="191"/>
    </location>
</feature>
<feature type="helix" evidence="2">
    <location>
        <begin position="193"/>
        <end position="195"/>
    </location>
</feature>
<comment type="function">
    <text evidence="1">Pyrophosphatase that catalyzes the hydrolysis of nucleoside triphosphates to their monophosphate derivatives, with a high preference for the non-canonical purine nucleotides XTP (xanthosine triphosphate), dITP (deoxyinosine triphosphate) and ITP. Seems to function as a house-cleaning enzyme that removes non-canonical purine nucleotides from the nucleotide pool, thus preventing their incorporation into DNA/RNA and avoiding chromosomal lesions.</text>
</comment>
<comment type="catalytic activity">
    <reaction evidence="1">
        <text>XTP + H2O = XMP + diphosphate + H(+)</text>
        <dbReference type="Rhea" id="RHEA:28610"/>
        <dbReference type="ChEBI" id="CHEBI:15377"/>
        <dbReference type="ChEBI" id="CHEBI:15378"/>
        <dbReference type="ChEBI" id="CHEBI:33019"/>
        <dbReference type="ChEBI" id="CHEBI:57464"/>
        <dbReference type="ChEBI" id="CHEBI:61314"/>
        <dbReference type="EC" id="3.6.1.66"/>
    </reaction>
</comment>
<comment type="catalytic activity">
    <reaction evidence="1">
        <text>dITP + H2O = dIMP + diphosphate + H(+)</text>
        <dbReference type="Rhea" id="RHEA:28342"/>
        <dbReference type="ChEBI" id="CHEBI:15377"/>
        <dbReference type="ChEBI" id="CHEBI:15378"/>
        <dbReference type="ChEBI" id="CHEBI:33019"/>
        <dbReference type="ChEBI" id="CHEBI:61194"/>
        <dbReference type="ChEBI" id="CHEBI:61382"/>
        <dbReference type="EC" id="3.6.1.66"/>
    </reaction>
</comment>
<comment type="catalytic activity">
    <reaction evidence="1">
        <text>ITP + H2O = IMP + diphosphate + H(+)</text>
        <dbReference type="Rhea" id="RHEA:29399"/>
        <dbReference type="ChEBI" id="CHEBI:15377"/>
        <dbReference type="ChEBI" id="CHEBI:15378"/>
        <dbReference type="ChEBI" id="CHEBI:33019"/>
        <dbReference type="ChEBI" id="CHEBI:58053"/>
        <dbReference type="ChEBI" id="CHEBI:61402"/>
        <dbReference type="EC" id="3.6.1.66"/>
    </reaction>
</comment>
<comment type="cofactor">
    <cofactor evidence="1">
        <name>Mg(2+)</name>
        <dbReference type="ChEBI" id="CHEBI:18420"/>
    </cofactor>
    <text evidence="1">Binds 1 Mg(2+) ion per subunit.</text>
</comment>
<comment type="subunit">
    <text evidence="1">Homodimer.</text>
</comment>
<comment type="similarity">
    <text evidence="1">Belongs to the HAM1 NTPase family.</text>
</comment>
<reference key="1">
    <citation type="journal article" date="2009" name="PLoS ONE">
        <title>Non mycobacterial virulence genes in the genome of the emerging pathogen Mycobacterium abscessus.</title>
        <authorList>
            <person name="Ripoll F."/>
            <person name="Pasek S."/>
            <person name="Schenowitz C."/>
            <person name="Dossat C."/>
            <person name="Barbe V."/>
            <person name="Rottman M."/>
            <person name="Macheras E."/>
            <person name="Heym B."/>
            <person name="Herrmann J.L."/>
            <person name="Daffe M."/>
            <person name="Brosch R."/>
            <person name="Risler J.L."/>
            <person name="Gaillard J.L."/>
        </authorList>
    </citation>
    <scope>NUCLEOTIDE SEQUENCE [LARGE SCALE GENOMIC DNA]</scope>
    <source>
        <strain>ATCC 19977 / DSM 44196 / CCUG 20993 / CIP 104536 / JCM 13569 / NCTC 13031 / TMC 1543 / L948</strain>
    </source>
</reference>
<organism>
    <name type="scientific">Mycobacteroides abscessus (strain ATCC 19977 / DSM 44196 / CCUG 20993 / CIP 104536 / JCM 13569 / NCTC 13031 / TMC 1543 / L948)</name>
    <name type="common">Mycobacterium abscessus</name>
    <dbReference type="NCBI Taxonomy" id="561007"/>
    <lineage>
        <taxon>Bacteria</taxon>
        <taxon>Bacillati</taxon>
        <taxon>Actinomycetota</taxon>
        <taxon>Actinomycetes</taxon>
        <taxon>Mycobacteriales</taxon>
        <taxon>Mycobacteriaceae</taxon>
        <taxon>Mycobacteroides</taxon>
        <taxon>Mycobacteroides abscessus</taxon>
    </lineage>
</organism>
<sequence>MKILVASRNPKKLAELSRVLESSGVSGVELVSLTDVPEYEEVPETGASFEDNALIKAREGVKHTGLACVADDSGLAVDALNWMPGVLSARWSGRHGDDAANTALLLAQLSDIPDERRGAAFVSACALVTPEGEEVVVEGRWKGSIARIPAGQNGFGYDPIFVPRGGLRTAAELTPEEKDAVSHRGRALAALLPMLRNLVNLGRTAP</sequence>
<keyword id="KW-0002">3D-structure</keyword>
<keyword id="KW-0378">Hydrolase</keyword>
<keyword id="KW-0460">Magnesium</keyword>
<keyword id="KW-0479">Metal-binding</keyword>
<keyword id="KW-0546">Nucleotide metabolism</keyword>
<keyword id="KW-0547">Nucleotide-binding</keyword>
<keyword id="KW-1185">Reference proteome</keyword>
<protein>
    <recommendedName>
        <fullName evidence="1">dITP/XTP pyrophosphatase</fullName>
        <ecNumber evidence="1">3.6.1.66</ecNumber>
    </recommendedName>
    <alternativeName>
        <fullName evidence="1">Non-canonical purine NTP pyrophosphatase</fullName>
    </alternativeName>
    <alternativeName>
        <fullName evidence="1">Non-standard purine NTP pyrophosphatase</fullName>
    </alternativeName>
    <alternativeName>
        <fullName evidence="1">Nucleoside-triphosphate diphosphatase</fullName>
    </alternativeName>
    <alternativeName>
        <fullName evidence="1">Nucleoside-triphosphate pyrophosphatase</fullName>
        <shortName evidence="1">NTPase</shortName>
    </alternativeName>
</protein>
<proteinExistence type="evidence at protein level"/>
<name>IXTPA_MYCA9</name>
<gene>
    <name type="ordered locus">MAB_1485</name>
</gene>
<accession>B1MLZ4</accession>
<dbReference type="EC" id="3.6.1.66" evidence="1"/>
<dbReference type="EMBL" id="CU458896">
    <property type="protein sequence ID" value="CAM61571.1"/>
    <property type="molecule type" value="Genomic_DNA"/>
</dbReference>
<dbReference type="PDB" id="6WWD">
    <property type="method" value="X-ray"/>
    <property type="resolution" value="2.10 A"/>
    <property type="chains" value="A/B/C/D=1-206"/>
</dbReference>
<dbReference type="PDBsum" id="6WWD"/>
<dbReference type="SMR" id="B1MLZ4"/>
<dbReference type="GeneID" id="93378433"/>
<dbReference type="KEGG" id="mab:MAB_1485"/>
<dbReference type="Proteomes" id="UP000007137">
    <property type="component" value="Chromosome"/>
</dbReference>
<dbReference type="GO" id="GO:0005829">
    <property type="term" value="C:cytosol"/>
    <property type="evidence" value="ECO:0007669"/>
    <property type="project" value="TreeGrafter"/>
</dbReference>
<dbReference type="GO" id="GO:0035870">
    <property type="term" value="F:dITP diphosphatase activity"/>
    <property type="evidence" value="ECO:0007669"/>
    <property type="project" value="RHEA"/>
</dbReference>
<dbReference type="GO" id="GO:0036220">
    <property type="term" value="F:ITP diphosphatase activity"/>
    <property type="evidence" value="ECO:0007669"/>
    <property type="project" value="UniProtKB-EC"/>
</dbReference>
<dbReference type="GO" id="GO:0046872">
    <property type="term" value="F:metal ion binding"/>
    <property type="evidence" value="ECO:0007669"/>
    <property type="project" value="UniProtKB-KW"/>
</dbReference>
<dbReference type="GO" id="GO:0000166">
    <property type="term" value="F:nucleotide binding"/>
    <property type="evidence" value="ECO:0007669"/>
    <property type="project" value="UniProtKB-KW"/>
</dbReference>
<dbReference type="GO" id="GO:0017111">
    <property type="term" value="F:ribonucleoside triphosphate phosphatase activity"/>
    <property type="evidence" value="ECO:0007669"/>
    <property type="project" value="InterPro"/>
</dbReference>
<dbReference type="GO" id="GO:0036222">
    <property type="term" value="F:XTP diphosphatase activity"/>
    <property type="evidence" value="ECO:0007669"/>
    <property type="project" value="RHEA"/>
</dbReference>
<dbReference type="GO" id="GO:0009117">
    <property type="term" value="P:nucleotide metabolic process"/>
    <property type="evidence" value="ECO:0007669"/>
    <property type="project" value="UniProtKB-KW"/>
</dbReference>
<dbReference type="GO" id="GO:0009146">
    <property type="term" value="P:purine nucleoside triphosphate catabolic process"/>
    <property type="evidence" value="ECO:0007669"/>
    <property type="project" value="UniProtKB-UniRule"/>
</dbReference>
<dbReference type="CDD" id="cd00515">
    <property type="entry name" value="HAM1"/>
    <property type="match status" value="1"/>
</dbReference>
<dbReference type="FunFam" id="3.90.950.10:FF:000001">
    <property type="entry name" value="dITP/XTP pyrophosphatase"/>
    <property type="match status" value="1"/>
</dbReference>
<dbReference type="Gene3D" id="3.90.950.10">
    <property type="match status" value="1"/>
</dbReference>
<dbReference type="HAMAP" id="MF_01405">
    <property type="entry name" value="Non_canon_purine_NTPase"/>
    <property type="match status" value="1"/>
</dbReference>
<dbReference type="InterPro" id="IPR020922">
    <property type="entry name" value="dITP/XTP_pyrophosphatase"/>
</dbReference>
<dbReference type="InterPro" id="IPR029001">
    <property type="entry name" value="ITPase-like_fam"/>
</dbReference>
<dbReference type="InterPro" id="IPR002637">
    <property type="entry name" value="RdgB/HAM1"/>
</dbReference>
<dbReference type="NCBIfam" id="TIGR00042">
    <property type="entry name" value="RdgB/HAM1 family non-canonical purine NTP pyrophosphatase"/>
    <property type="match status" value="1"/>
</dbReference>
<dbReference type="PANTHER" id="PTHR11067:SF9">
    <property type="entry name" value="INOSINE TRIPHOSPHATE PYROPHOSPHATASE"/>
    <property type="match status" value="1"/>
</dbReference>
<dbReference type="PANTHER" id="PTHR11067">
    <property type="entry name" value="INOSINE TRIPHOSPHATE PYROPHOSPHATASE/HAM1 PROTEIN"/>
    <property type="match status" value="1"/>
</dbReference>
<dbReference type="Pfam" id="PF01725">
    <property type="entry name" value="Ham1p_like"/>
    <property type="match status" value="1"/>
</dbReference>
<dbReference type="SUPFAM" id="SSF52972">
    <property type="entry name" value="ITPase-like"/>
    <property type="match status" value="1"/>
</dbReference>
<evidence type="ECO:0000255" key="1">
    <source>
        <dbReference type="HAMAP-Rule" id="MF_01405"/>
    </source>
</evidence>
<evidence type="ECO:0007829" key="2">
    <source>
        <dbReference type="PDB" id="6WWD"/>
    </source>
</evidence>